<reference key="1">
    <citation type="journal article" date="2009" name="Proc. Natl. Acad. Sci. U.S.A.">
        <title>The genomic basis of trophic strategy in marine bacteria.</title>
        <authorList>
            <person name="Lauro F.M."/>
            <person name="McDougald D."/>
            <person name="Thomas T."/>
            <person name="Williams T.J."/>
            <person name="Egan S."/>
            <person name="Rice S."/>
            <person name="DeMaere M.Z."/>
            <person name="Ting L."/>
            <person name="Ertan H."/>
            <person name="Johnson J."/>
            <person name="Ferriera S."/>
            <person name="Lapidus A."/>
            <person name="Anderson I."/>
            <person name="Kyrpides N."/>
            <person name="Munk A.C."/>
            <person name="Detter C."/>
            <person name="Han C.S."/>
            <person name="Brown M.V."/>
            <person name="Robb F.T."/>
            <person name="Kjelleberg S."/>
            <person name="Cavicchioli R."/>
        </authorList>
    </citation>
    <scope>NUCLEOTIDE SEQUENCE [LARGE SCALE GENOMIC DNA]</scope>
    <source>
        <strain>DSM 13593 / LMG 18877 / RB2256</strain>
    </source>
</reference>
<gene>
    <name evidence="1" type="primary">purA</name>
    <name type="ordered locus">Sala_0510</name>
</gene>
<keyword id="KW-0963">Cytoplasm</keyword>
<keyword id="KW-0342">GTP-binding</keyword>
<keyword id="KW-0436">Ligase</keyword>
<keyword id="KW-0460">Magnesium</keyword>
<keyword id="KW-0479">Metal-binding</keyword>
<keyword id="KW-0547">Nucleotide-binding</keyword>
<keyword id="KW-0658">Purine biosynthesis</keyword>
<keyword id="KW-1185">Reference proteome</keyword>
<accession>Q1GVU1</accession>
<protein>
    <recommendedName>
        <fullName evidence="1">Adenylosuccinate synthetase</fullName>
        <shortName evidence="1">AMPSase</shortName>
        <shortName evidence="1">AdSS</shortName>
        <ecNumber evidence="1">6.3.4.4</ecNumber>
    </recommendedName>
    <alternativeName>
        <fullName evidence="1">IMP--aspartate ligase</fullName>
    </alternativeName>
</protein>
<feature type="chain" id="PRO_1000000924" description="Adenylosuccinate synthetase">
    <location>
        <begin position="1"/>
        <end position="429"/>
    </location>
</feature>
<feature type="active site" description="Proton acceptor" evidence="1">
    <location>
        <position position="13"/>
    </location>
</feature>
<feature type="active site" description="Proton donor" evidence="1">
    <location>
        <position position="41"/>
    </location>
</feature>
<feature type="binding site" evidence="1">
    <location>
        <begin position="12"/>
        <end position="18"/>
    </location>
    <ligand>
        <name>GTP</name>
        <dbReference type="ChEBI" id="CHEBI:37565"/>
    </ligand>
</feature>
<feature type="binding site" description="in other chain" evidence="1">
    <location>
        <begin position="13"/>
        <end position="16"/>
    </location>
    <ligand>
        <name>IMP</name>
        <dbReference type="ChEBI" id="CHEBI:58053"/>
        <note>ligand shared between dimeric partners</note>
    </ligand>
</feature>
<feature type="binding site" evidence="1">
    <location>
        <position position="13"/>
    </location>
    <ligand>
        <name>Mg(2+)</name>
        <dbReference type="ChEBI" id="CHEBI:18420"/>
    </ligand>
</feature>
<feature type="binding site" description="in other chain" evidence="1">
    <location>
        <begin position="38"/>
        <end position="41"/>
    </location>
    <ligand>
        <name>IMP</name>
        <dbReference type="ChEBI" id="CHEBI:58053"/>
        <note>ligand shared between dimeric partners</note>
    </ligand>
</feature>
<feature type="binding site" evidence="1">
    <location>
        <begin position="40"/>
        <end position="42"/>
    </location>
    <ligand>
        <name>GTP</name>
        <dbReference type="ChEBI" id="CHEBI:37565"/>
    </ligand>
</feature>
<feature type="binding site" evidence="1">
    <location>
        <position position="40"/>
    </location>
    <ligand>
        <name>Mg(2+)</name>
        <dbReference type="ChEBI" id="CHEBI:18420"/>
    </ligand>
</feature>
<feature type="binding site" description="in other chain" evidence="1">
    <location>
        <position position="129"/>
    </location>
    <ligand>
        <name>IMP</name>
        <dbReference type="ChEBI" id="CHEBI:58053"/>
        <note>ligand shared between dimeric partners</note>
    </ligand>
</feature>
<feature type="binding site" evidence="1">
    <location>
        <position position="143"/>
    </location>
    <ligand>
        <name>IMP</name>
        <dbReference type="ChEBI" id="CHEBI:58053"/>
        <note>ligand shared between dimeric partners</note>
    </ligand>
</feature>
<feature type="binding site" description="in other chain" evidence="1">
    <location>
        <position position="223"/>
    </location>
    <ligand>
        <name>IMP</name>
        <dbReference type="ChEBI" id="CHEBI:58053"/>
        <note>ligand shared between dimeric partners</note>
    </ligand>
</feature>
<feature type="binding site" description="in other chain" evidence="1">
    <location>
        <position position="238"/>
    </location>
    <ligand>
        <name>IMP</name>
        <dbReference type="ChEBI" id="CHEBI:58053"/>
        <note>ligand shared between dimeric partners</note>
    </ligand>
</feature>
<feature type="binding site" evidence="1">
    <location>
        <begin position="298"/>
        <end position="304"/>
    </location>
    <ligand>
        <name>substrate</name>
    </ligand>
</feature>
<feature type="binding site" description="in other chain" evidence="1">
    <location>
        <position position="302"/>
    </location>
    <ligand>
        <name>IMP</name>
        <dbReference type="ChEBI" id="CHEBI:58053"/>
        <note>ligand shared between dimeric partners</note>
    </ligand>
</feature>
<feature type="binding site" evidence="1">
    <location>
        <position position="304"/>
    </location>
    <ligand>
        <name>GTP</name>
        <dbReference type="ChEBI" id="CHEBI:37565"/>
    </ligand>
</feature>
<feature type="binding site" evidence="1">
    <location>
        <begin position="330"/>
        <end position="332"/>
    </location>
    <ligand>
        <name>GTP</name>
        <dbReference type="ChEBI" id="CHEBI:37565"/>
    </ligand>
</feature>
<feature type="binding site" evidence="1">
    <location>
        <begin position="412"/>
        <end position="414"/>
    </location>
    <ligand>
        <name>GTP</name>
        <dbReference type="ChEBI" id="CHEBI:37565"/>
    </ligand>
</feature>
<proteinExistence type="inferred from homology"/>
<sequence length="429" mass="46274">MANVTVIGSQWGDEGKGKIVDWLASRADAVVRFQGGHNAGHTLVVGEQVYKLSLLPSGIVTGTLSIIGNGVVLDPWALRDEITKLRGQGVEINADNFAIADNCALILPFHRDLDALRETAAGAGKIGTTGRGIGPAYEDKVGRRAIRVCDLAHLDHLEPQLDRLTAHHDALRAGFGEPPIDRDKLVADLREIADYVLEYAQPVWKRLKKVRKAGARILFEGAQGVLLDIDHGTYPFVTSSNTVSGTAASGSGLGPGAVGFVLGIAKAYTTRVGSGPFPTELEDETGQRLGERGHEFGTVTGRKRRCGWFDAVLVRQSCAVSGVTGIALTKLDVLDGFDTIRICTGYRLRGKILDYFPAHAADQAAVEPIYEEMDGWHESTAGARSYADLPAQAIKYIQRVQELIETPIALVSTSPEREDTILIRDPFSD</sequence>
<dbReference type="EC" id="6.3.4.4" evidence="1"/>
<dbReference type="EMBL" id="CP000356">
    <property type="protein sequence ID" value="ABF52231.1"/>
    <property type="molecule type" value="Genomic_DNA"/>
</dbReference>
<dbReference type="RefSeq" id="WP_011540822.1">
    <property type="nucleotide sequence ID" value="NC_008048.1"/>
</dbReference>
<dbReference type="SMR" id="Q1GVU1"/>
<dbReference type="STRING" id="317655.Sala_0510"/>
<dbReference type="KEGG" id="sal:Sala_0510"/>
<dbReference type="eggNOG" id="COG0104">
    <property type="taxonomic scope" value="Bacteria"/>
</dbReference>
<dbReference type="HOGENOM" id="CLU_029848_0_0_5"/>
<dbReference type="OrthoDB" id="9807553at2"/>
<dbReference type="UniPathway" id="UPA00075">
    <property type="reaction ID" value="UER00335"/>
</dbReference>
<dbReference type="Proteomes" id="UP000006578">
    <property type="component" value="Chromosome"/>
</dbReference>
<dbReference type="GO" id="GO:0005737">
    <property type="term" value="C:cytoplasm"/>
    <property type="evidence" value="ECO:0007669"/>
    <property type="project" value="UniProtKB-SubCell"/>
</dbReference>
<dbReference type="GO" id="GO:0004019">
    <property type="term" value="F:adenylosuccinate synthase activity"/>
    <property type="evidence" value="ECO:0007669"/>
    <property type="project" value="UniProtKB-UniRule"/>
</dbReference>
<dbReference type="GO" id="GO:0005525">
    <property type="term" value="F:GTP binding"/>
    <property type="evidence" value="ECO:0007669"/>
    <property type="project" value="UniProtKB-UniRule"/>
</dbReference>
<dbReference type="GO" id="GO:0000287">
    <property type="term" value="F:magnesium ion binding"/>
    <property type="evidence" value="ECO:0007669"/>
    <property type="project" value="UniProtKB-UniRule"/>
</dbReference>
<dbReference type="GO" id="GO:0044208">
    <property type="term" value="P:'de novo' AMP biosynthetic process"/>
    <property type="evidence" value="ECO:0007669"/>
    <property type="project" value="UniProtKB-UniRule"/>
</dbReference>
<dbReference type="GO" id="GO:0046040">
    <property type="term" value="P:IMP metabolic process"/>
    <property type="evidence" value="ECO:0007669"/>
    <property type="project" value="TreeGrafter"/>
</dbReference>
<dbReference type="CDD" id="cd03108">
    <property type="entry name" value="AdSS"/>
    <property type="match status" value="1"/>
</dbReference>
<dbReference type="FunFam" id="1.10.300.10:FF:000001">
    <property type="entry name" value="Adenylosuccinate synthetase"/>
    <property type="match status" value="1"/>
</dbReference>
<dbReference type="FunFam" id="3.90.170.10:FF:000001">
    <property type="entry name" value="Adenylosuccinate synthetase"/>
    <property type="match status" value="1"/>
</dbReference>
<dbReference type="Gene3D" id="3.40.440.10">
    <property type="entry name" value="Adenylosuccinate Synthetase, subunit A, domain 1"/>
    <property type="match status" value="1"/>
</dbReference>
<dbReference type="Gene3D" id="1.10.300.10">
    <property type="entry name" value="Adenylosuccinate Synthetase, subunit A, domain 2"/>
    <property type="match status" value="1"/>
</dbReference>
<dbReference type="Gene3D" id="3.90.170.10">
    <property type="entry name" value="Adenylosuccinate Synthetase, subunit A, domain 3"/>
    <property type="match status" value="1"/>
</dbReference>
<dbReference type="HAMAP" id="MF_00011">
    <property type="entry name" value="Adenylosucc_synth"/>
    <property type="match status" value="1"/>
</dbReference>
<dbReference type="InterPro" id="IPR018220">
    <property type="entry name" value="Adenylosuccin_syn_GTP-bd"/>
</dbReference>
<dbReference type="InterPro" id="IPR033128">
    <property type="entry name" value="Adenylosuccin_syn_Lys_AS"/>
</dbReference>
<dbReference type="InterPro" id="IPR042109">
    <property type="entry name" value="Adenylosuccinate_synth_dom1"/>
</dbReference>
<dbReference type="InterPro" id="IPR042110">
    <property type="entry name" value="Adenylosuccinate_synth_dom2"/>
</dbReference>
<dbReference type="InterPro" id="IPR042111">
    <property type="entry name" value="Adenylosuccinate_synth_dom3"/>
</dbReference>
<dbReference type="InterPro" id="IPR001114">
    <property type="entry name" value="Adenylosuccinate_synthetase"/>
</dbReference>
<dbReference type="InterPro" id="IPR027417">
    <property type="entry name" value="P-loop_NTPase"/>
</dbReference>
<dbReference type="NCBIfam" id="NF002223">
    <property type="entry name" value="PRK01117.1"/>
    <property type="match status" value="1"/>
</dbReference>
<dbReference type="NCBIfam" id="TIGR00184">
    <property type="entry name" value="purA"/>
    <property type="match status" value="1"/>
</dbReference>
<dbReference type="PANTHER" id="PTHR11846">
    <property type="entry name" value="ADENYLOSUCCINATE SYNTHETASE"/>
    <property type="match status" value="1"/>
</dbReference>
<dbReference type="PANTHER" id="PTHR11846:SF0">
    <property type="entry name" value="ADENYLOSUCCINATE SYNTHETASE"/>
    <property type="match status" value="1"/>
</dbReference>
<dbReference type="Pfam" id="PF00709">
    <property type="entry name" value="Adenylsucc_synt"/>
    <property type="match status" value="1"/>
</dbReference>
<dbReference type="SMART" id="SM00788">
    <property type="entry name" value="Adenylsucc_synt"/>
    <property type="match status" value="1"/>
</dbReference>
<dbReference type="SUPFAM" id="SSF52540">
    <property type="entry name" value="P-loop containing nucleoside triphosphate hydrolases"/>
    <property type="match status" value="1"/>
</dbReference>
<dbReference type="PROSITE" id="PS01266">
    <property type="entry name" value="ADENYLOSUCCIN_SYN_1"/>
    <property type="match status" value="1"/>
</dbReference>
<dbReference type="PROSITE" id="PS00513">
    <property type="entry name" value="ADENYLOSUCCIN_SYN_2"/>
    <property type="match status" value="1"/>
</dbReference>
<organism>
    <name type="scientific">Sphingopyxis alaskensis (strain DSM 13593 / LMG 18877 / RB2256)</name>
    <name type="common">Sphingomonas alaskensis</name>
    <dbReference type="NCBI Taxonomy" id="317655"/>
    <lineage>
        <taxon>Bacteria</taxon>
        <taxon>Pseudomonadati</taxon>
        <taxon>Pseudomonadota</taxon>
        <taxon>Alphaproteobacteria</taxon>
        <taxon>Sphingomonadales</taxon>
        <taxon>Sphingomonadaceae</taxon>
        <taxon>Sphingopyxis</taxon>
    </lineage>
</organism>
<comment type="function">
    <text evidence="1">Plays an important role in the de novo pathway of purine nucleotide biosynthesis. Catalyzes the first committed step in the biosynthesis of AMP from IMP.</text>
</comment>
<comment type="catalytic activity">
    <reaction evidence="1">
        <text>IMP + L-aspartate + GTP = N(6)-(1,2-dicarboxyethyl)-AMP + GDP + phosphate + 2 H(+)</text>
        <dbReference type="Rhea" id="RHEA:15753"/>
        <dbReference type="ChEBI" id="CHEBI:15378"/>
        <dbReference type="ChEBI" id="CHEBI:29991"/>
        <dbReference type="ChEBI" id="CHEBI:37565"/>
        <dbReference type="ChEBI" id="CHEBI:43474"/>
        <dbReference type="ChEBI" id="CHEBI:57567"/>
        <dbReference type="ChEBI" id="CHEBI:58053"/>
        <dbReference type="ChEBI" id="CHEBI:58189"/>
        <dbReference type="EC" id="6.3.4.4"/>
    </reaction>
</comment>
<comment type="cofactor">
    <cofactor evidence="1">
        <name>Mg(2+)</name>
        <dbReference type="ChEBI" id="CHEBI:18420"/>
    </cofactor>
    <text evidence="1">Binds 1 Mg(2+) ion per subunit.</text>
</comment>
<comment type="pathway">
    <text evidence="1">Purine metabolism; AMP biosynthesis via de novo pathway; AMP from IMP: step 1/2.</text>
</comment>
<comment type="subunit">
    <text evidence="1">Homodimer.</text>
</comment>
<comment type="subcellular location">
    <subcellularLocation>
        <location evidence="1">Cytoplasm</location>
    </subcellularLocation>
</comment>
<comment type="similarity">
    <text evidence="1">Belongs to the adenylosuccinate synthetase family.</text>
</comment>
<evidence type="ECO:0000255" key="1">
    <source>
        <dbReference type="HAMAP-Rule" id="MF_00011"/>
    </source>
</evidence>
<name>PURA_SPHAL</name>